<evidence type="ECO:0000255" key="1"/>
<evidence type="ECO:0000256" key="2">
    <source>
        <dbReference type="SAM" id="MobiDB-lite"/>
    </source>
</evidence>
<evidence type="ECO:0000269" key="3">
    <source>
    </source>
</evidence>
<evidence type="ECO:0000269" key="4">
    <source>
    </source>
</evidence>
<evidence type="ECO:0000269" key="5">
    <source>
    </source>
</evidence>
<evidence type="ECO:0000303" key="6">
    <source>
    </source>
</evidence>
<evidence type="ECO:0000305" key="7"/>
<evidence type="ECO:0007744" key="8">
    <source>
    </source>
</evidence>
<evidence type="ECO:0007744" key="9">
    <source>
    </source>
</evidence>
<evidence type="ECO:0007744" key="10">
    <source>
    </source>
</evidence>
<evidence type="ECO:0007829" key="11">
    <source>
        <dbReference type="PDB" id="7EMF"/>
    </source>
</evidence>
<gene>
    <name type="primary">MED4</name>
    <name type="synonym">ARC36</name>
    <name type="synonym">DRIP36</name>
    <name type="synonym">VDRIP</name>
    <name type="ORF">HSPC126</name>
</gene>
<dbReference type="EMBL" id="AF300618">
    <property type="protein sequence ID" value="AAG22542.1"/>
    <property type="molecule type" value="mRNA"/>
</dbReference>
<dbReference type="EMBL" id="AF230381">
    <property type="protein sequence ID" value="AAF37289.1"/>
    <property type="molecule type" value="mRNA"/>
</dbReference>
<dbReference type="EMBL" id="AF161475">
    <property type="protein sequence ID" value="AAF29090.1"/>
    <property type="molecule type" value="mRNA"/>
</dbReference>
<dbReference type="EMBL" id="AK001934">
    <property type="protein sequence ID" value="BAA91987.1"/>
    <property type="molecule type" value="mRNA"/>
</dbReference>
<dbReference type="EMBL" id="CR457276">
    <property type="protein sequence ID" value="CAG33557.1"/>
    <property type="molecule type" value="mRNA"/>
</dbReference>
<dbReference type="EMBL" id="CR541830">
    <property type="protein sequence ID" value="CAG46629.1"/>
    <property type="molecule type" value="mRNA"/>
</dbReference>
<dbReference type="EMBL" id="AK222713">
    <property type="protein sequence ID" value="BAD96433.1"/>
    <property type="molecule type" value="mRNA"/>
</dbReference>
<dbReference type="EMBL" id="AK301835">
    <property type="protein sequence ID" value="BAG63279.1"/>
    <property type="molecule type" value="mRNA"/>
</dbReference>
<dbReference type="EMBL" id="AK223017">
    <property type="protein sequence ID" value="BAD96737.1"/>
    <property type="molecule type" value="mRNA"/>
</dbReference>
<dbReference type="EMBL" id="AL158196">
    <property type="status" value="NOT_ANNOTATED_CDS"/>
    <property type="molecule type" value="Genomic_DNA"/>
</dbReference>
<dbReference type="EMBL" id="BC005189">
    <property type="protein sequence ID" value="AAH05189.1"/>
    <property type="molecule type" value="mRNA"/>
</dbReference>
<dbReference type="CCDS" id="CCDS59241.1">
    <molecule id="Q9NPJ6-2"/>
</dbReference>
<dbReference type="CCDS" id="CCDS9408.1">
    <molecule id="Q9NPJ6-1"/>
</dbReference>
<dbReference type="RefSeq" id="NP_001257558.1">
    <molecule id="Q9NPJ6-2"/>
    <property type="nucleotide sequence ID" value="NM_001270629.2"/>
</dbReference>
<dbReference type="RefSeq" id="NP_054885.1">
    <molecule id="Q9NPJ6-1"/>
    <property type="nucleotide sequence ID" value="NM_014166.4"/>
</dbReference>
<dbReference type="PDB" id="7EMF">
    <property type="method" value="EM"/>
    <property type="resolution" value="3.50 A"/>
    <property type="chains" value="D=1-270"/>
</dbReference>
<dbReference type="PDB" id="7ENA">
    <property type="method" value="EM"/>
    <property type="resolution" value="4.07 A"/>
    <property type="chains" value="d=1-270"/>
</dbReference>
<dbReference type="PDB" id="7ENC">
    <property type="method" value="EM"/>
    <property type="resolution" value="4.13 A"/>
    <property type="chains" value="d=1-270"/>
</dbReference>
<dbReference type="PDB" id="7ENJ">
    <property type="method" value="EM"/>
    <property type="resolution" value="4.40 A"/>
    <property type="chains" value="D=1-270"/>
</dbReference>
<dbReference type="PDB" id="7LBM">
    <property type="method" value="EM"/>
    <property type="resolution" value="4.80 A"/>
    <property type="chains" value="s=1-270"/>
</dbReference>
<dbReference type="PDB" id="7NVR">
    <property type="method" value="EM"/>
    <property type="resolution" value="4.50 A"/>
    <property type="chains" value="h=1-270"/>
</dbReference>
<dbReference type="PDB" id="8GXQ">
    <property type="method" value="EM"/>
    <property type="resolution" value="5.04 A"/>
    <property type="chains" value="d=1-270"/>
</dbReference>
<dbReference type="PDB" id="8GXS">
    <property type="method" value="EM"/>
    <property type="resolution" value="4.16 A"/>
    <property type="chains" value="d=1-270"/>
</dbReference>
<dbReference type="PDB" id="8T9D">
    <property type="method" value="EM"/>
    <property type="resolution" value="4.66 A"/>
    <property type="chains" value="B=1-270"/>
</dbReference>
<dbReference type="PDB" id="8TQW">
    <property type="method" value="EM"/>
    <property type="resolution" value="8.20 A"/>
    <property type="chains" value="D=1-270"/>
</dbReference>
<dbReference type="PDB" id="8TRH">
    <property type="method" value="EM"/>
    <property type="resolution" value="3.70 A"/>
    <property type="chains" value="D=1-270"/>
</dbReference>
<dbReference type="PDBsum" id="7EMF"/>
<dbReference type="PDBsum" id="7ENA"/>
<dbReference type="PDBsum" id="7ENC"/>
<dbReference type="PDBsum" id="7ENJ"/>
<dbReference type="PDBsum" id="7LBM"/>
<dbReference type="PDBsum" id="7NVR"/>
<dbReference type="PDBsum" id="8GXQ"/>
<dbReference type="PDBsum" id="8GXS"/>
<dbReference type="PDBsum" id="8T9D"/>
<dbReference type="PDBsum" id="8TQW"/>
<dbReference type="PDBsum" id="8TRH"/>
<dbReference type="EMDB" id="EMD-12610"/>
<dbReference type="EMDB" id="EMD-23255"/>
<dbReference type="EMDB" id="EMD-31191"/>
<dbReference type="EMDB" id="EMD-31204"/>
<dbReference type="EMDB" id="EMD-31207"/>
<dbReference type="EMDB" id="EMD-31211"/>
<dbReference type="EMDB" id="EMD-34359"/>
<dbReference type="EMDB" id="EMD-34360"/>
<dbReference type="EMDB" id="EMD-41107"/>
<dbReference type="EMDB" id="EMD-41565"/>
<dbReference type="EMDB" id="EMD-41580"/>
<dbReference type="SMR" id="Q9NPJ6"/>
<dbReference type="BioGRID" id="118849">
    <property type="interactions" value="459"/>
</dbReference>
<dbReference type="ComplexPortal" id="CPX-3227">
    <property type="entry name" value="Core mediator complex"/>
</dbReference>
<dbReference type="CORUM" id="Q9NPJ6"/>
<dbReference type="FunCoup" id="Q9NPJ6">
    <property type="interactions" value="3968"/>
</dbReference>
<dbReference type="IntAct" id="Q9NPJ6">
    <property type="interactions" value="396"/>
</dbReference>
<dbReference type="MINT" id="Q9NPJ6"/>
<dbReference type="STRING" id="9606.ENSP00000258648"/>
<dbReference type="GlyGen" id="Q9NPJ6">
    <property type="glycosylation" value="1 site, 1 O-linked glycan (1 site)"/>
</dbReference>
<dbReference type="iPTMnet" id="Q9NPJ6"/>
<dbReference type="PhosphoSitePlus" id="Q9NPJ6"/>
<dbReference type="BioMuta" id="MED4"/>
<dbReference type="DMDM" id="29840770"/>
<dbReference type="jPOST" id="Q9NPJ6"/>
<dbReference type="MassIVE" id="Q9NPJ6"/>
<dbReference type="PaxDb" id="9606-ENSP00000258648"/>
<dbReference type="PeptideAtlas" id="Q9NPJ6"/>
<dbReference type="ProteomicsDB" id="5415"/>
<dbReference type="ProteomicsDB" id="82028">
    <molecule id="Q9NPJ6-1"/>
</dbReference>
<dbReference type="Pumba" id="Q9NPJ6"/>
<dbReference type="Antibodypedia" id="1791">
    <property type="antibodies" value="214 antibodies from 34 providers"/>
</dbReference>
<dbReference type="DNASU" id="29079"/>
<dbReference type="Ensembl" id="ENST00000258648.7">
    <molecule id="Q9NPJ6-1"/>
    <property type="protein sequence ID" value="ENSP00000258648.2"/>
    <property type="gene ID" value="ENSG00000136146.15"/>
</dbReference>
<dbReference type="Ensembl" id="ENST00000378586.5">
    <molecule id="Q9NPJ6-2"/>
    <property type="protein sequence ID" value="ENSP00000367849.1"/>
    <property type="gene ID" value="ENSG00000136146.15"/>
</dbReference>
<dbReference type="GeneID" id="29079"/>
<dbReference type="KEGG" id="hsa:29079"/>
<dbReference type="MANE-Select" id="ENST00000258648.7">
    <property type="protein sequence ID" value="ENSP00000258648.2"/>
    <property type="RefSeq nucleotide sequence ID" value="NM_014166.4"/>
    <property type="RefSeq protein sequence ID" value="NP_054885.1"/>
</dbReference>
<dbReference type="UCSC" id="uc001vby.3">
    <molecule id="Q9NPJ6-1"/>
    <property type="organism name" value="human"/>
</dbReference>
<dbReference type="AGR" id="HGNC:17903"/>
<dbReference type="CTD" id="29079"/>
<dbReference type="DisGeNET" id="29079"/>
<dbReference type="GeneCards" id="MED4"/>
<dbReference type="HGNC" id="HGNC:17903">
    <property type="gene designation" value="MED4"/>
</dbReference>
<dbReference type="HPA" id="ENSG00000136146">
    <property type="expression patterns" value="Low tissue specificity"/>
</dbReference>
<dbReference type="MIM" id="605718">
    <property type="type" value="gene"/>
</dbReference>
<dbReference type="neXtProt" id="NX_Q9NPJ6"/>
<dbReference type="OpenTargets" id="ENSG00000136146"/>
<dbReference type="PharmGKB" id="PA134877001"/>
<dbReference type="VEuPathDB" id="HostDB:ENSG00000136146"/>
<dbReference type="eggNOG" id="KOG4552">
    <property type="taxonomic scope" value="Eukaryota"/>
</dbReference>
<dbReference type="GeneTree" id="ENSGT00390000012063"/>
<dbReference type="HOGENOM" id="CLU_082233_0_0_1"/>
<dbReference type="InParanoid" id="Q9NPJ6"/>
<dbReference type="OMA" id="LEMRLGM"/>
<dbReference type="OrthoDB" id="1929813at2759"/>
<dbReference type="PAN-GO" id="Q9NPJ6">
    <property type="GO annotations" value="3 GO annotations based on evolutionary models"/>
</dbReference>
<dbReference type="PhylomeDB" id="Q9NPJ6"/>
<dbReference type="TreeFam" id="TF324421"/>
<dbReference type="PathwayCommons" id="Q9NPJ6"/>
<dbReference type="Reactome" id="R-HSA-1989781">
    <property type="pathway name" value="PPARA activates gene expression"/>
</dbReference>
<dbReference type="Reactome" id="R-HSA-212436">
    <property type="pathway name" value="Generic Transcription Pathway"/>
</dbReference>
<dbReference type="Reactome" id="R-HSA-381340">
    <property type="pathway name" value="Transcriptional regulation of white adipocyte differentiation"/>
</dbReference>
<dbReference type="Reactome" id="R-HSA-9833110">
    <property type="pathway name" value="RSV-host interactions"/>
</dbReference>
<dbReference type="Reactome" id="R-HSA-9841922">
    <property type="pathway name" value="MLL4 and MLL3 complexes regulate expression of PPARG target genes in adipogenesis and hepatic steatosis"/>
</dbReference>
<dbReference type="SignaLink" id="Q9NPJ6"/>
<dbReference type="SIGNOR" id="Q9NPJ6"/>
<dbReference type="BioGRID-ORCS" id="29079">
    <property type="hits" value="751 hits in 1161 CRISPR screens"/>
</dbReference>
<dbReference type="ChiTaRS" id="MED4">
    <property type="organism name" value="human"/>
</dbReference>
<dbReference type="GeneWiki" id="MED4"/>
<dbReference type="GenomeRNAi" id="29079"/>
<dbReference type="Pharos" id="Q9NPJ6">
    <property type="development level" value="Tbio"/>
</dbReference>
<dbReference type="PRO" id="PR:Q9NPJ6"/>
<dbReference type="Proteomes" id="UP000005640">
    <property type="component" value="Chromosome 13"/>
</dbReference>
<dbReference type="RNAct" id="Q9NPJ6">
    <property type="molecule type" value="protein"/>
</dbReference>
<dbReference type="Bgee" id="ENSG00000136146">
    <property type="expression patterns" value="Expressed in primordial germ cell in gonad and 196 other cell types or tissues"/>
</dbReference>
<dbReference type="ExpressionAtlas" id="Q9NPJ6">
    <property type="expression patterns" value="baseline and differential"/>
</dbReference>
<dbReference type="GO" id="GO:0070847">
    <property type="term" value="C:core mediator complex"/>
    <property type="evidence" value="ECO:0000353"/>
    <property type="project" value="ComplexPortal"/>
</dbReference>
<dbReference type="GO" id="GO:0016592">
    <property type="term" value="C:mediator complex"/>
    <property type="evidence" value="ECO:0000314"/>
    <property type="project" value="UniProtKB"/>
</dbReference>
<dbReference type="GO" id="GO:0016020">
    <property type="term" value="C:membrane"/>
    <property type="evidence" value="ECO:0007005"/>
    <property type="project" value="UniProtKB"/>
</dbReference>
<dbReference type="GO" id="GO:0005654">
    <property type="term" value="C:nucleoplasm"/>
    <property type="evidence" value="ECO:0000314"/>
    <property type="project" value="HPA"/>
</dbReference>
<dbReference type="GO" id="GO:0005634">
    <property type="term" value="C:nucleus"/>
    <property type="evidence" value="ECO:0000314"/>
    <property type="project" value="UniProtKB"/>
</dbReference>
<dbReference type="GO" id="GO:0046966">
    <property type="term" value="F:nuclear thyroid hormone receptor binding"/>
    <property type="evidence" value="ECO:0000314"/>
    <property type="project" value="UniProtKB"/>
</dbReference>
<dbReference type="GO" id="GO:0042809">
    <property type="term" value="F:nuclear vitamin D receptor binding"/>
    <property type="evidence" value="ECO:0000303"/>
    <property type="project" value="UniProtKB"/>
</dbReference>
<dbReference type="GO" id="GO:0003713">
    <property type="term" value="F:transcription coactivator activity"/>
    <property type="evidence" value="ECO:0000314"/>
    <property type="project" value="UniProtKB"/>
</dbReference>
<dbReference type="GO" id="GO:0003712">
    <property type="term" value="F:transcription coregulator activity"/>
    <property type="evidence" value="ECO:0000314"/>
    <property type="project" value="UniProtKB"/>
</dbReference>
<dbReference type="GO" id="GO:0045893">
    <property type="term" value="P:positive regulation of DNA-templated transcription"/>
    <property type="evidence" value="ECO:0000314"/>
    <property type="project" value="UniProtKB"/>
</dbReference>
<dbReference type="GO" id="GO:0032968">
    <property type="term" value="P:positive regulation of transcription elongation by RNA polymerase II"/>
    <property type="evidence" value="ECO:0000303"/>
    <property type="project" value="ComplexPortal"/>
</dbReference>
<dbReference type="GO" id="GO:0060261">
    <property type="term" value="P:positive regulation of transcription initiation by RNA polymerase II"/>
    <property type="evidence" value="ECO:0000314"/>
    <property type="project" value="UniProtKB"/>
</dbReference>
<dbReference type="GO" id="GO:0006357">
    <property type="term" value="P:regulation of transcription by RNA polymerase II"/>
    <property type="evidence" value="ECO:0000318"/>
    <property type="project" value="GO_Central"/>
</dbReference>
<dbReference type="GO" id="GO:0051123">
    <property type="term" value="P:RNA polymerase II preinitiation complex assembly"/>
    <property type="evidence" value="ECO:0000303"/>
    <property type="project" value="ComplexPortal"/>
</dbReference>
<dbReference type="GO" id="GO:0006366">
    <property type="term" value="P:transcription by RNA polymerase II"/>
    <property type="evidence" value="ECO:0000314"/>
    <property type="project" value="UniProtKB"/>
</dbReference>
<dbReference type="InterPro" id="IPR019258">
    <property type="entry name" value="Mediator_Med4"/>
</dbReference>
<dbReference type="PANTHER" id="PTHR13208">
    <property type="entry name" value="MEDIATOR OF RNA POLYMERASE II TRANSCRIPTION SUBUNIT 4"/>
    <property type="match status" value="1"/>
</dbReference>
<dbReference type="PANTHER" id="PTHR13208:SF2">
    <property type="entry name" value="MEDIATOR OF RNA POLYMERASE II TRANSCRIPTION SUBUNIT 4"/>
    <property type="match status" value="1"/>
</dbReference>
<dbReference type="Pfam" id="PF10018">
    <property type="entry name" value="Med4"/>
    <property type="match status" value="1"/>
</dbReference>
<organism>
    <name type="scientific">Homo sapiens</name>
    <name type="common">Human</name>
    <dbReference type="NCBI Taxonomy" id="9606"/>
    <lineage>
        <taxon>Eukaryota</taxon>
        <taxon>Metazoa</taxon>
        <taxon>Chordata</taxon>
        <taxon>Craniata</taxon>
        <taxon>Vertebrata</taxon>
        <taxon>Euteleostomi</taxon>
        <taxon>Mammalia</taxon>
        <taxon>Eutheria</taxon>
        <taxon>Euarchontoglires</taxon>
        <taxon>Primates</taxon>
        <taxon>Haplorrhini</taxon>
        <taxon>Catarrhini</taxon>
        <taxon>Hominidae</taxon>
        <taxon>Homo</taxon>
    </lineage>
</organism>
<keyword id="KW-0002">3D-structure</keyword>
<keyword id="KW-0007">Acetylation</keyword>
<keyword id="KW-0010">Activator</keyword>
<keyword id="KW-0025">Alternative splicing</keyword>
<keyword id="KW-0175">Coiled coil</keyword>
<keyword id="KW-0903">Direct protein sequencing</keyword>
<keyword id="KW-0539">Nucleus</keyword>
<keyword id="KW-0597">Phosphoprotein</keyword>
<keyword id="KW-1267">Proteomics identification</keyword>
<keyword id="KW-1185">Reference proteome</keyword>
<keyword id="KW-0804">Transcription</keyword>
<keyword id="KW-0805">Transcription regulation</keyword>
<sequence>MAASSSGEKEKERLGGGLGVAGGNSTRERLLSALEDLEVLSRELIEMLAISRNQKLLQAGEENQVLELLIHRDGEFQELMKLALNQGKIHHEMQVLEKEVEKRDSDIQQLQKQLKEAEQILATAVYQAKEKLKSIEKARKGAISSEEIIKYAHRISASNAVCAPLTWVPGDPRRPYPTDLEMRSGLLGQMNNPSTNGVNGHLPGDALAAGRLPDVLAPQYPWQSNDMSMNMLPPNHSSDFLLEPPGHNKENEDDVEIMSTDSSSSSSESD</sequence>
<comment type="function">
    <text>Component of the Mediator complex, a coactivator involved in the regulated transcription of nearly all RNA polymerase II-dependent genes. Mediator functions as a bridge to convey information from gene-specific regulatory proteins to the basal RNA polymerase II transcription machinery. Mediator is recruited to promoters by direct interactions with regulatory proteins and serves as a scaffold for the assembly of a functional preinitiation complex with RNA polymerase II and the general transcription factors.</text>
</comment>
<comment type="subunit">
    <text evidence="3 4 5">Component of the Mediator complex, which is composed of MED1, MED4, MED6, MED7, MED8, MED9, MED10, MED11, MED12, MED13, MED13L, MED14, MED15, MED16, MED17, MED18, MED19, MED20, MED21, MED22, MED23, MED24, MED25, MED26, MED27, MED29, MED30, MED31, CCNC, CDK8 and CDC2L6/CDK11. The MED12, MED13, CCNC and CDK8 subunits form a distinct module termed the CDK8 module. Mediator containing the CDK8 module is less active than Mediator lacking this module in supporting transcriptional activation. Individual preparations of the Mediator complex lacking one or more distinct subunits have been variously termed ARC, CRSP, DRIP, PC2, SMCC and TRAP.</text>
</comment>
<comment type="interaction">
    <interactant intactId="EBI-394607">
        <id>Q9NPJ6</id>
    </interactant>
    <interactant intactId="EBI-17286414">
        <id>A2BDD9</id>
        <label>AMOT</label>
    </interactant>
    <organismsDiffer>false</organismsDiffer>
    <experiments>3</experiments>
</comment>
<comment type="interaction">
    <interactant intactId="EBI-394607">
        <id>Q9NPJ6</id>
    </interactant>
    <interactant intactId="EBI-3891843">
        <id>Q4VCS5-2</id>
        <label>AMOT</label>
    </interactant>
    <organismsDiffer>false</organismsDiffer>
    <experiments>3</experiments>
</comment>
<comment type="interaction">
    <interactant intactId="EBI-394607">
        <id>Q9NPJ6</id>
    </interactant>
    <interactant intactId="EBI-747505">
        <id>Q8TAB5</id>
        <label>C1orf216</label>
    </interactant>
    <organismsDiffer>false</organismsDiffer>
    <experiments>3</experiments>
</comment>
<comment type="interaction">
    <interactant intactId="EBI-394607">
        <id>Q9NPJ6</id>
    </interactant>
    <interactant intactId="EBI-10247802">
        <id>Q8IYE0-2</id>
        <label>CCDC146</label>
    </interactant>
    <organismsDiffer>false</organismsDiffer>
    <experiments>3</experiments>
</comment>
<comment type="interaction">
    <interactant intactId="EBI-394607">
        <id>Q9NPJ6</id>
    </interactant>
    <interactant intactId="EBI-10175300">
        <id>Q8TD31-3</id>
        <label>CCHCR1</label>
    </interactant>
    <organismsDiffer>false</organismsDiffer>
    <experiments>6</experiments>
</comment>
<comment type="interaction">
    <interactant intactId="EBI-394607">
        <id>Q9NPJ6</id>
    </interactant>
    <interactant intactId="EBI-748128">
        <id>Q8WYA6</id>
        <label>CTNNBL1</label>
    </interactant>
    <organismsDiffer>false</organismsDiffer>
    <experiments>3</experiments>
</comment>
<comment type="interaction">
    <interactant intactId="EBI-394607">
        <id>Q9NPJ6</id>
    </interactant>
    <interactant intactId="EBI-751248">
        <id>Q8NE31</id>
        <label>FAM13C</label>
    </interactant>
    <organismsDiffer>false</organismsDiffer>
    <experiments>3</experiments>
</comment>
<comment type="interaction">
    <interactant intactId="EBI-394607">
        <id>Q9NPJ6</id>
    </interactant>
    <interactant intactId="EBI-741729">
        <id>Q96NE9</id>
        <label>FRMD6</label>
    </interactant>
    <organismsDiffer>false</organismsDiffer>
    <experiments>3</experiments>
</comment>
<comment type="interaction">
    <interactant intactId="EBI-394607">
        <id>Q9NPJ6</id>
    </interactant>
    <interactant intactId="EBI-10192648">
        <id>O95954</id>
        <label>FTCD</label>
    </interactant>
    <organismsDiffer>false</organismsDiffer>
    <experiments>3</experiments>
</comment>
<comment type="interaction">
    <interactant intactId="EBI-394607">
        <id>Q9NPJ6</id>
    </interactant>
    <interactant intactId="EBI-746252">
        <id>Q96CN9</id>
        <label>GCC1</label>
    </interactant>
    <organismsDiffer>false</organismsDiffer>
    <experiments>3</experiments>
</comment>
<comment type="interaction">
    <interactant intactId="EBI-394607">
        <id>Q9NPJ6</id>
    </interactant>
    <interactant intactId="EBI-2514791">
        <id>Q96CS2</id>
        <label>HAUS1</label>
    </interactant>
    <organismsDiffer>false</organismsDiffer>
    <experiments>4</experiments>
</comment>
<comment type="interaction">
    <interactant intactId="EBI-394607">
        <id>Q9NPJ6</id>
    </interactant>
    <interactant intactId="EBI-740220">
        <id>O14964</id>
        <label>HGS</label>
    </interactant>
    <organismsDiffer>false</organismsDiffer>
    <experiments>3</experiments>
</comment>
<comment type="interaction">
    <interactant intactId="EBI-394607">
        <id>Q9NPJ6</id>
    </interactant>
    <interactant intactId="EBI-744203">
        <id>Q8IY31</id>
        <label>IFT20</label>
    </interactant>
    <organismsDiffer>false</organismsDiffer>
    <experiments>6</experiments>
</comment>
<comment type="interaction">
    <interactant intactId="EBI-394607">
        <id>Q9NPJ6</id>
    </interactant>
    <interactant intactId="EBI-10990676">
        <id>Q96PC2</id>
        <label>IP6K3</label>
    </interactant>
    <organismsDiffer>false</organismsDiffer>
    <experiments>3</experiments>
</comment>
<comment type="interaction">
    <interactant intactId="EBI-394607">
        <id>Q9NPJ6</id>
    </interactant>
    <interactant intactId="EBI-2125614">
        <id>Q9BVG8</id>
        <label>KIFC3</label>
    </interactant>
    <organismsDiffer>false</organismsDiffer>
    <experiments>3</experiments>
</comment>
<comment type="interaction">
    <interactant intactId="EBI-394607">
        <id>Q9NPJ6</id>
    </interactant>
    <interactant intactId="EBI-14069005">
        <id>Q9BVG8-5</id>
        <label>KIFC3</label>
    </interactant>
    <organismsDiffer>false</organismsDiffer>
    <experiments>3</experiments>
</comment>
<comment type="interaction">
    <interactant intactId="EBI-394607">
        <id>Q9NPJ6</id>
    </interactant>
    <interactant intactId="EBI-10240044">
        <id>Q32MZ4-4</id>
        <label>LRRFIP1</label>
    </interactant>
    <organismsDiffer>false</organismsDiffer>
    <experiments>3</experiments>
</comment>
<comment type="interaction">
    <interactant intactId="EBI-394607">
        <id>Q9NPJ6</id>
    </interactant>
    <interactant intactId="EBI-10268010">
        <id>Q8N8X9</id>
        <label>MAB21L3</label>
    </interactant>
    <organismsDiffer>false</organismsDiffer>
    <experiments>3</experiments>
</comment>
<comment type="interaction">
    <interactant intactId="EBI-394607">
        <id>Q9NPJ6</id>
    </interactant>
    <interactant intactId="EBI-348259">
        <id>Q96EZ8</id>
        <label>MCRS1</label>
    </interactant>
    <organismsDiffer>false</organismsDiffer>
    <experiments>4</experiments>
</comment>
<comment type="interaction">
    <interactant intactId="EBI-394607">
        <id>Q9NPJ6</id>
    </interactant>
    <interactant intactId="EBI-394357">
        <id>Q93074</id>
        <label>MED12</label>
    </interactant>
    <organismsDiffer>false</organismsDiffer>
    <experiments>12</experiments>
</comment>
<comment type="interaction">
    <interactant intactId="EBI-394607">
        <id>Q9NPJ6</id>
    </interactant>
    <interactant intactId="EBI-394678">
        <id>Q13503</id>
        <label>MED21</label>
    </interactant>
    <organismsDiffer>false</organismsDiffer>
    <experiments>11</experiments>
</comment>
<comment type="interaction">
    <interactant intactId="EBI-394607">
        <id>Q9NPJ6</id>
    </interactant>
    <interactant intactId="EBI-394392">
        <id>O95402</id>
        <label>MED26</label>
    </interactant>
    <organismsDiffer>false</organismsDiffer>
    <experiments>15</experiments>
</comment>
<comment type="interaction">
    <interactant intactId="EBI-394607">
        <id>Q9NPJ6</id>
    </interactant>
    <interactant intactId="EBI-394653">
        <id>Q9NWA0</id>
        <label>MED9</label>
    </interactant>
    <organismsDiffer>false</organismsDiffer>
    <experiments>17</experiments>
</comment>
<comment type="interaction">
    <interactant intactId="EBI-394607">
        <id>Q9NPJ6</id>
    </interactant>
    <interactant intactId="EBI-715849">
        <id>O14777</id>
        <label>NDC80</label>
    </interactant>
    <organismsDiffer>false</organismsDiffer>
    <experiments>4</experiments>
</comment>
<comment type="interaction">
    <interactant intactId="EBI-394607">
        <id>Q9NPJ6</id>
    </interactant>
    <interactant intactId="EBI-536879">
        <id>O43482</id>
        <label>OIP5</label>
    </interactant>
    <organismsDiffer>false</organismsDiffer>
    <experiments>3</experiments>
</comment>
<comment type="interaction">
    <interactant intactId="EBI-394607">
        <id>Q9NPJ6</id>
    </interactant>
    <interactant intactId="EBI-727004">
        <id>O00560</id>
        <label>SDCBP</label>
    </interactant>
    <organismsDiffer>false</organismsDiffer>
    <experiments>3</experiments>
</comment>
<comment type="interaction">
    <interactant intactId="EBI-394607">
        <id>Q9NPJ6</id>
    </interactant>
    <interactant intactId="EBI-743117">
        <id>Q96ES7</id>
        <label>SGF29</label>
    </interactant>
    <organismsDiffer>false</organismsDiffer>
    <experiments>3</experiments>
</comment>
<comment type="interaction">
    <interactant intactId="EBI-394607">
        <id>Q9NPJ6</id>
    </interactant>
    <interactant intactId="EBI-358489">
        <id>Q96GM5</id>
        <label>SMARCD1</label>
    </interactant>
    <organismsDiffer>false</organismsDiffer>
    <experiments>6</experiments>
</comment>
<comment type="interaction">
    <interactant intactId="EBI-394607">
        <id>Q9NPJ6</id>
    </interactant>
    <interactant intactId="EBI-455078">
        <id>Q969G3</id>
        <label>SMARCE1</label>
    </interactant>
    <organismsDiffer>false</organismsDiffer>
    <experiments>3</experiments>
</comment>
<comment type="interaction">
    <interactant intactId="EBI-394607">
        <id>Q9NPJ6</id>
    </interactant>
    <interactant intactId="EBI-10295431">
        <id>Q99909</id>
        <label>SSX3</label>
    </interactant>
    <organismsDiffer>false</organismsDiffer>
    <experiments>6</experiments>
</comment>
<comment type="interaction">
    <interactant intactId="EBI-394607">
        <id>Q9NPJ6</id>
    </interactant>
    <interactant intactId="EBI-11958386">
        <id>Q6PIF2</id>
        <label>SYCE2</label>
    </interactant>
    <organismsDiffer>false</organismsDiffer>
    <experiments>4</experiments>
</comment>
<comment type="interaction">
    <interactant intactId="EBI-394607">
        <id>Q9NPJ6</id>
    </interactant>
    <interactant intactId="EBI-717810">
        <id>Q08117</id>
        <label>TLE5</label>
    </interactant>
    <organismsDiffer>false</organismsDiffer>
    <experiments>3</experiments>
</comment>
<comment type="interaction">
    <interactant intactId="EBI-394607">
        <id>Q9NPJ6</id>
    </interactant>
    <interactant intactId="EBI-1049336">
        <id>O95379</id>
        <label>TNFAIP8</label>
    </interactant>
    <organismsDiffer>false</organismsDiffer>
    <experiments>7</experiments>
</comment>
<comment type="interaction">
    <interactant intactId="EBI-394607">
        <id>Q9NPJ6</id>
    </interactant>
    <interactant intactId="EBI-752102">
        <id>Q8WVP5</id>
        <label>TNFAIP8L1</label>
    </interactant>
    <organismsDiffer>false</organismsDiffer>
    <experiments>3</experiments>
</comment>
<comment type="interaction">
    <interactant intactId="EBI-394607">
        <id>Q9NPJ6</id>
    </interactant>
    <interactant intactId="EBI-359793">
        <id>P40222</id>
        <label>TXLNA</label>
    </interactant>
    <organismsDiffer>false</organismsDiffer>
    <experiments>9</experiments>
</comment>
<comment type="interaction">
    <interactant intactId="EBI-394607">
        <id>Q9NPJ6</id>
    </interactant>
    <interactant intactId="EBI-6116822">
        <id>Q8N3L3</id>
        <label>TXLNB</label>
    </interactant>
    <organismsDiffer>false</organismsDiffer>
    <experiments>6</experiments>
</comment>
<comment type="interaction">
    <interactant intactId="EBI-394607">
        <id>Q9NPJ6</id>
    </interactant>
    <interactant intactId="EBI-739895">
        <id>Q8N6Y0</id>
        <label>USHBP1</label>
    </interactant>
    <organismsDiffer>false</organismsDiffer>
    <experiments>6</experiments>
</comment>
<comment type="subcellular location">
    <subcellularLocation>
        <location>Nucleus</location>
    </subcellularLocation>
</comment>
<comment type="alternative products">
    <event type="alternative splicing"/>
    <isoform>
        <id>Q9NPJ6-1</id>
        <name>1</name>
        <sequence type="displayed"/>
    </isoform>
    <isoform>
        <id>Q9NPJ6-2</id>
        <name>2</name>
        <sequence type="described" ref="VSP_047072"/>
    </isoform>
</comment>
<comment type="similarity">
    <text evidence="7">Belongs to the Mediator complex subunit 4 family.</text>
</comment>
<reference key="1">
    <citation type="journal article" date="1999" name="Nature">
        <title>Ligand-dependent transcription activation by nuclear receptors requires the DRIP complex.</title>
        <authorList>
            <person name="Rachez C."/>
            <person name="Lemon B.D."/>
            <person name="Suldan Z."/>
            <person name="Bromleigh V."/>
            <person name="Gamble M."/>
            <person name="Naeaer A.M."/>
            <person name="Erdjument-Bromage H."/>
            <person name="Tempst P."/>
            <person name="Freedman L.P."/>
        </authorList>
    </citation>
    <scope>NUCLEOTIDE SEQUENCE [MRNA] (ISOFORM 1)</scope>
</reference>
<reference key="2">
    <citation type="journal article" date="2000" name="Mol. Cell">
        <title>The USA-derived transcriptional coactivator PC2 is a submodule of TRAP/SMCC and acts synergistically with other PCs.</title>
        <authorList>
            <person name="Malik S."/>
            <person name="Gu W."/>
            <person name="Wu W."/>
            <person name="Qin J."/>
            <person name="Roeder R.G."/>
        </authorList>
    </citation>
    <scope>NUCLEOTIDE SEQUENCE [MRNA] (ISOFORM 1)</scope>
    <scope>PROTEIN SEQUENCE OF 14-27 AND 30-42</scope>
</reference>
<reference key="3">
    <citation type="journal article" date="2000" name="Genome Res.">
        <title>Cloning and functional analysis of cDNAs with open reading frames for 300 previously undefined genes expressed in CD34+ hematopoietic stem/progenitor cells.</title>
        <authorList>
            <person name="Zhang Q.-H."/>
            <person name="Ye M."/>
            <person name="Wu X.-Y."/>
            <person name="Ren S.-X."/>
            <person name="Zhao M."/>
            <person name="Zhao C.-J."/>
            <person name="Fu G."/>
            <person name="Shen Y."/>
            <person name="Fan H.-Y."/>
            <person name="Lu G."/>
            <person name="Zhong M."/>
            <person name="Xu X.-R."/>
            <person name="Han Z.-G."/>
            <person name="Zhang J.-W."/>
            <person name="Tao J."/>
            <person name="Huang Q.-H."/>
            <person name="Zhou J."/>
            <person name="Hu G.-X."/>
            <person name="Gu J."/>
            <person name="Chen S.-J."/>
            <person name="Chen Z."/>
        </authorList>
    </citation>
    <scope>NUCLEOTIDE SEQUENCE [LARGE SCALE MRNA] (ISOFORM 1)</scope>
    <source>
        <tissue>Umbilical cord blood</tissue>
    </source>
</reference>
<reference key="4">
    <citation type="journal article" date="2004" name="Nat. Genet.">
        <title>Complete sequencing and characterization of 21,243 full-length human cDNAs.</title>
        <authorList>
            <person name="Ota T."/>
            <person name="Suzuki Y."/>
            <person name="Nishikawa T."/>
            <person name="Otsuki T."/>
            <person name="Sugiyama T."/>
            <person name="Irie R."/>
            <person name="Wakamatsu A."/>
            <person name="Hayashi K."/>
            <person name="Sato H."/>
            <person name="Nagai K."/>
            <person name="Kimura K."/>
            <person name="Makita H."/>
            <person name="Sekine M."/>
            <person name="Obayashi M."/>
            <person name="Nishi T."/>
            <person name="Shibahara T."/>
            <person name="Tanaka T."/>
            <person name="Ishii S."/>
            <person name="Yamamoto J."/>
            <person name="Saito K."/>
            <person name="Kawai Y."/>
            <person name="Isono Y."/>
            <person name="Nakamura Y."/>
            <person name="Nagahari K."/>
            <person name="Murakami K."/>
            <person name="Yasuda T."/>
            <person name="Iwayanagi T."/>
            <person name="Wagatsuma M."/>
            <person name="Shiratori A."/>
            <person name="Sudo H."/>
            <person name="Hosoiri T."/>
            <person name="Kaku Y."/>
            <person name="Kodaira H."/>
            <person name="Kondo H."/>
            <person name="Sugawara M."/>
            <person name="Takahashi M."/>
            <person name="Kanda K."/>
            <person name="Yokoi T."/>
            <person name="Furuya T."/>
            <person name="Kikkawa E."/>
            <person name="Omura Y."/>
            <person name="Abe K."/>
            <person name="Kamihara K."/>
            <person name="Katsuta N."/>
            <person name="Sato K."/>
            <person name="Tanikawa M."/>
            <person name="Yamazaki M."/>
            <person name="Ninomiya K."/>
            <person name="Ishibashi T."/>
            <person name="Yamashita H."/>
            <person name="Murakawa K."/>
            <person name="Fujimori K."/>
            <person name="Tanai H."/>
            <person name="Kimata M."/>
            <person name="Watanabe M."/>
            <person name="Hiraoka S."/>
            <person name="Chiba Y."/>
            <person name="Ishida S."/>
            <person name="Ono Y."/>
            <person name="Takiguchi S."/>
            <person name="Watanabe S."/>
            <person name="Yosida M."/>
            <person name="Hotuta T."/>
            <person name="Kusano J."/>
            <person name="Kanehori K."/>
            <person name="Takahashi-Fujii A."/>
            <person name="Hara H."/>
            <person name="Tanase T.-O."/>
            <person name="Nomura Y."/>
            <person name="Togiya S."/>
            <person name="Komai F."/>
            <person name="Hara R."/>
            <person name="Takeuchi K."/>
            <person name="Arita M."/>
            <person name="Imose N."/>
            <person name="Musashino K."/>
            <person name="Yuuki H."/>
            <person name="Oshima A."/>
            <person name="Sasaki N."/>
            <person name="Aotsuka S."/>
            <person name="Yoshikawa Y."/>
            <person name="Matsunawa H."/>
            <person name="Ichihara T."/>
            <person name="Shiohata N."/>
            <person name="Sano S."/>
            <person name="Moriya S."/>
            <person name="Momiyama H."/>
            <person name="Satoh N."/>
            <person name="Takami S."/>
            <person name="Terashima Y."/>
            <person name="Suzuki O."/>
            <person name="Nakagawa S."/>
            <person name="Senoh A."/>
            <person name="Mizoguchi H."/>
            <person name="Goto Y."/>
            <person name="Shimizu F."/>
            <person name="Wakebe H."/>
            <person name="Hishigaki H."/>
            <person name="Watanabe T."/>
            <person name="Sugiyama A."/>
            <person name="Takemoto M."/>
            <person name="Kawakami B."/>
            <person name="Yamazaki M."/>
            <person name="Watanabe K."/>
            <person name="Kumagai A."/>
            <person name="Itakura S."/>
            <person name="Fukuzumi Y."/>
            <person name="Fujimori Y."/>
            <person name="Komiyama M."/>
            <person name="Tashiro H."/>
            <person name="Tanigami A."/>
            <person name="Fujiwara T."/>
            <person name="Ono T."/>
            <person name="Yamada K."/>
            <person name="Fujii Y."/>
            <person name="Ozaki K."/>
            <person name="Hirao M."/>
            <person name="Ohmori Y."/>
            <person name="Kawabata A."/>
            <person name="Hikiji T."/>
            <person name="Kobatake N."/>
            <person name="Inagaki H."/>
            <person name="Ikema Y."/>
            <person name="Okamoto S."/>
            <person name="Okitani R."/>
            <person name="Kawakami T."/>
            <person name="Noguchi S."/>
            <person name="Itoh T."/>
            <person name="Shigeta K."/>
            <person name="Senba T."/>
            <person name="Matsumura K."/>
            <person name="Nakajima Y."/>
            <person name="Mizuno T."/>
            <person name="Morinaga M."/>
            <person name="Sasaki M."/>
            <person name="Togashi T."/>
            <person name="Oyama M."/>
            <person name="Hata H."/>
            <person name="Watanabe M."/>
            <person name="Komatsu T."/>
            <person name="Mizushima-Sugano J."/>
            <person name="Satoh T."/>
            <person name="Shirai Y."/>
            <person name="Takahashi Y."/>
            <person name="Nakagawa K."/>
            <person name="Okumura K."/>
            <person name="Nagase T."/>
            <person name="Nomura N."/>
            <person name="Kikuchi H."/>
            <person name="Masuho Y."/>
            <person name="Yamashita R."/>
            <person name="Nakai K."/>
            <person name="Yada T."/>
            <person name="Nakamura Y."/>
            <person name="Ohara O."/>
            <person name="Isogai T."/>
            <person name="Sugano S."/>
        </authorList>
    </citation>
    <scope>NUCLEOTIDE SEQUENCE [LARGE SCALE MRNA] (ISOFORMS 1 AND 2)</scope>
    <source>
        <tissue>Placenta</tissue>
        <tissue>Testis</tissue>
    </source>
</reference>
<reference key="5">
    <citation type="submission" date="2004-06" db="EMBL/GenBank/DDBJ databases">
        <title>Cloning of human full open reading frames in Gateway(TM) system entry vector (pDONR201).</title>
        <authorList>
            <person name="Halleck A."/>
            <person name="Ebert L."/>
            <person name="Mkoundinya M."/>
            <person name="Schick M."/>
            <person name="Eisenstein S."/>
            <person name="Neubert P."/>
            <person name="Kstrang K."/>
            <person name="Schatten R."/>
            <person name="Shen B."/>
            <person name="Henze S."/>
            <person name="Mar W."/>
            <person name="Korn B."/>
            <person name="Zuo D."/>
            <person name="Hu Y."/>
            <person name="LaBaer J."/>
        </authorList>
    </citation>
    <scope>NUCLEOTIDE SEQUENCE [LARGE SCALE MRNA] (ISOFORM 1)</scope>
</reference>
<reference key="6">
    <citation type="submission" date="2005-04" db="EMBL/GenBank/DDBJ databases">
        <authorList>
            <person name="Suzuki Y."/>
            <person name="Sugano S."/>
            <person name="Totoki Y."/>
            <person name="Toyoda A."/>
            <person name="Takeda T."/>
            <person name="Sakaki Y."/>
            <person name="Tanaka A."/>
            <person name="Yokoyama S."/>
        </authorList>
    </citation>
    <scope>NUCLEOTIDE SEQUENCE [LARGE SCALE MRNA] (ISOFORM 1)</scope>
    <source>
        <tissue>Brain</tissue>
        <tissue>Small intestine</tissue>
    </source>
</reference>
<reference key="7">
    <citation type="journal article" date="2004" name="Nature">
        <title>The DNA sequence and analysis of human chromosome 13.</title>
        <authorList>
            <person name="Dunham A."/>
            <person name="Matthews L.H."/>
            <person name="Burton J."/>
            <person name="Ashurst J.L."/>
            <person name="Howe K.L."/>
            <person name="Ashcroft K.J."/>
            <person name="Beare D.M."/>
            <person name="Burford D.C."/>
            <person name="Hunt S.E."/>
            <person name="Griffiths-Jones S."/>
            <person name="Jones M.C."/>
            <person name="Keenan S.J."/>
            <person name="Oliver K."/>
            <person name="Scott C.E."/>
            <person name="Ainscough R."/>
            <person name="Almeida J.P."/>
            <person name="Ambrose K.D."/>
            <person name="Andrews D.T."/>
            <person name="Ashwell R.I.S."/>
            <person name="Babbage A.K."/>
            <person name="Bagguley C.L."/>
            <person name="Bailey J."/>
            <person name="Bannerjee R."/>
            <person name="Barlow K.F."/>
            <person name="Bates K."/>
            <person name="Beasley H."/>
            <person name="Bird C.P."/>
            <person name="Bray-Allen S."/>
            <person name="Brown A.J."/>
            <person name="Brown J.Y."/>
            <person name="Burrill W."/>
            <person name="Carder C."/>
            <person name="Carter N.P."/>
            <person name="Chapman J.C."/>
            <person name="Clamp M.E."/>
            <person name="Clark S.Y."/>
            <person name="Clarke G."/>
            <person name="Clee C.M."/>
            <person name="Clegg S.C."/>
            <person name="Cobley V."/>
            <person name="Collins J.E."/>
            <person name="Corby N."/>
            <person name="Coville G.J."/>
            <person name="Deloukas P."/>
            <person name="Dhami P."/>
            <person name="Dunham I."/>
            <person name="Dunn M."/>
            <person name="Earthrowl M.E."/>
            <person name="Ellington A.G."/>
            <person name="Faulkner L."/>
            <person name="Frankish A.G."/>
            <person name="Frankland J."/>
            <person name="French L."/>
            <person name="Garner P."/>
            <person name="Garnett J."/>
            <person name="Gilbert J.G.R."/>
            <person name="Gilson C.J."/>
            <person name="Ghori J."/>
            <person name="Grafham D.V."/>
            <person name="Gribble S.M."/>
            <person name="Griffiths C."/>
            <person name="Hall R.E."/>
            <person name="Hammond S."/>
            <person name="Harley J.L."/>
            <person name="Hart E.A."/>
            <person name="Heath P.D."/>
            <person name="Howden P.J."/>
            <person name="Huckle E.J."/>
            <person name="Hunt P.J."/>
            <person name="Hunt A.R."/>
            <person name="Johnson C."/>
            <person name="Johnson D."/>
            <person name="Kay M."/>
            <person name="Kimberley A.M."/>
            <person name="King A."/>
            <person name="Laird G.K."/>
            <person name="Langford C.J."/>
            <person name="Lawlor S."/>
            <person name="Leongamornlert D.A."/>
            <person name="Lloyd D.M."/>
            <person name="Lloyd C."/>
            <person name="Loveland J.E."/>
            <person name="Lovell J."/>
            <person name="Martin S."/>
            <person name="Mashreghi-Mohammadi M."/>
            <person name="McLaren S.J."/>
            <person name="McMurray A."/>
            <person name="Milne S."/>
            <person name="Moore M.J.F."/>
            <person name="Nickerson T."/>
            <person name="Palmer S.A."/>
            <person name="Pearce A.V."/>
            <person name="Peck A.I."/>
            <person name="Pelan S."/>
            <person name="Phillimore B."/>
            <person name="Porter K.M."/>
            <person name="Rice C.M."/>
            <person name="Searle S."/>
            <person name="Sehra H.K."/>
            <person name="Shownkeen R."/>
            <person name="Skuce C.D."/>
            <person name="Smith M."/>
            <person name="Steward C.A."/>
            <person name="Sycamore N."/>
            <person name="Tester J."/>
            <person name="Thomas D.W."/>
            <person name="Tracey A."/>
            <person name="Tromans A."/>
            <person name="Tubby B."/>
            <person name="Wall M."/>
            <person name="Wallis J.M."/>
            <person name="West A.P."/>
            <person name="Whitehead S.L."/>
            <person name="Willey D.L."/>
            <person name="Wilming L."/>
            <person name="Wray P.W."/>
            <person name="Wright M.W."/>
            <person name="Young L."/>
            <person name="Coulson A."/>
            <person name="Durbin R.M."/>
            <person name="Hubbard T."/>
            <person name="Sulston J.E."/>
            <person name="Beck S."/>
            <person name="Bentley D.R."/>
            <person name="Rogers J."/>
            <person name="Ross M.T."/>
        </authorList>
    </citation>
    <scope>NUCLEOTIDE SEQUENCE [LARGE SCALE GENOMIC DNA]</scope>
</reference>
<reference key="8">
    <citation type="journal article" date="2004" name="Genome Res.">
        <title>The status, quality, and expansion of the NIH full-length cDNA project: the Mammalian Gene Collection (MGC).</title>
        <authorList>
            <consortium name="The MGC Project Team"/>
        </authorList>
    </citation>
    <scope>NUCLEOTIDE SEQUENCE [LARGE SCALE MRNA] (ISOFORM 1)</scope>
    <source>
        <tissue>Brain</tissue>
    </source>
</reference>
<reference key="9">
    <citation type="journal article" date="1999" name="Nature">
        <title>Composite co-activator ARC mediates chromatin-directed transcriptional activation.</title>
        <authorList>
            <person name="Naeaer A.M."/>
            <person name="Beaurang P.A."/>
            <person name="Zhou S."/>
            <person name="Abraham S."/>
            <person name="Solomon W.B."/>
            <person name="Tjian R."/>
        </authorList>
    </citation>
    <scope>IDENTIFICATION IN ARC COMPLEX</scope>
    <scope>PROTEIN SEQUENCE OF 81-88; 154-165 AND 173-183</scope>
</reference>
<reference key="10">
    <citation type="journal article" date="2004" name="Mol. Cell">
        <title>A set of consensus mammalian mediator subunits identified by multidimensional protein identification technology.</title>
        <authorList>
            <person name="Sato S."/>
            <person name="Tomomori-Sato C."/>
            <person name="Parmely T.J."/>
            <person name="Florens L."/>
            <person name="Zybailov B."/>
            <person name="Swanson S.K."/>
            <person name="Banks C.A.S."/>
            <person name="Jin J."/>
            <person name="Cai Y."/>
            <person name="Washburn M.P."/>
            <person name="Conaway J.W."/>
            <person name="Conaway R.C."/>
        </authorList>
    </citation>
    <scope>IDENTIFICATION BY MASS SPECTROMETRY</scope>
    <scope>IDENTIFICATION IN THE MEDIATOR COMPLEX</scope>
</reference>
<reference key="11">
    <citation type="journal article" date="2005" name="Mol. Cell">
        <title>MED1/TRAP220 exists predominantly in a TRAP/Mediator subpopulation enriched in RNA polymerase II and is required for ER-mediated transcription.</title>
        <authorList>
            <person name="Zhang X."/>
            <person name="Krutchinsky A."/>
            <person name="Fukuda A."/>
            <person name="Chen W."/>
            <person name="Yamamura S."/>
            <person name="Chait B.T."/>
            <person name="Roeder R.G."/>
        </authorList>
    </citation>
    <scope>IDENTIFICATION BY MASS SPECTROMETRY</scope>
    <scope>IDENTIFICATION IN THE MEDIATOR COMPLEX</scope>
    <scope>ASSOCIATION OF THE MEDIATOR COMPLEX WITH RNA POLYMERASE II</scope>
</reference>
<reference key="12">
    <citation type="journal article" date="2009" name="Mol. Cell. Proteomics">
        <title>Large-scale proteomics analysis of the human kinome.</title>
        <authorList>
            <person name="Oppermann F.S."/>
            <person name="Gnad F."/>
            <person name="Olsen J.V."/>
            <person name="Hornberger R."/>
            <person name="Greff Z."/>
            <person name="Keri G."/>
            <person name="Mann M."/>
            <person name="Daub H."/>
        </authorList>
    </citation>
    <scope>PHOSPHORYLATION [LARGE SCALE ANALYSIS] AT SER-32</scope>
    <scope>IDENTIFICATION BY MASS SPECTROMETRY [LARGE SCALE ANALYSIS]</scope>
</reference>
<reference key="13">
    <citation type="journal article" date="2009" name="Sci. Signal.">
        <title>Quantitative phosphoproteomic analysis of T cell receptor signaling reveals system-wide modulation of protein-protein interactions.</title>
        <authorList>
            <person name="Mayya V."/>
            <person name="Lundgren D.H."/>
            <person name="Hwang S.-I."/>
            <person name="Rezaul K."/>
            <person name="Wu L."/>
            <person name="Eng J.K."/>
            <person name="Rodionov V."/>
            <person name="Han D.K."/>
        </authorList>
    </citation>
    <scope>PHOSPHORYLATION [LARGE SCALE ANALYSIS] AT SER-32</scope>
    <scope>IDENTIFICATION BY MASS SPECTROMETRY [LARGE SCALE ANALYSIS]</scope>
    <source>
        <tissue>Leukemic T-cell</tissue>
    </source>
</reference>
<reference key="14">
    <citation type="journal article" date="2011" name="BMC Syst. Biol.">
        <title>Initial characterization of the human central proteome.</title>
        <authorList>
            <person name="Burkard T.R."/>
            <person name="Planyavsky M."/>
            <person name="Kaupe I."/>
            <person name="Breitwieser F.P."/>
            <person name="Buerckstuemmer T."/>
            <person name="Bennett K.L."/>
            <person name="Superti-Furga G."/>
            <person name="Colinge J."/>
        </authorList>
    </citation>
    <scope>IDENTIFICATION BY MASS SPECTROMETRY [LARGE SCALE ANALYSIS]</scope>
</reference>
<reference key="15">
    <citation type="journal article" date="2012" name="Proc. Natl. Acad. Sci. U.S.A.">
        <title>N-terminal acetylome analyses and functional insights of the N-terminal acetyltransferase NatB.</title>
        <authorList>
            <person name="Van Damme P."/>
            <person name="Lasa M."/>
            <person name="Polevoda B."/>
            <person name="Gazquez C."/>
            <person name="Elosegui-Artola A."/>
            <person name="Kim D.S."/>
            <person name="De Juan-Pardo E."/>
            <person name="Demeyer K."/>
            <person name="Hole K."/>
            <person name="Larrea E."/>
            <person name="Timmerman E."/>
            <person name="Prieto J."/>
            <person name="Arnesen T."/>
            <person name="Sherman F."/>
            <person name="Gevaert K."/>
            <person name="Aldabe R."/>
        </authorList>
    </citation>
    <scope>ACETYLATION [LARGE SCALE ANALYSIS] AT ALA-2</scope>
    <scope>CLEAVAGE OF INITIATOR METHIONINE [LARGE SCALE ANALYSIS]</scope>
    <scope>IDENTIFICATION BY MASS SPECTROMETRY [LARGE SCALE ANALYSIS]</scope>
</reference>
<protein>
    <recommendedName>
        <fullName>Mediator of RNA polymerase II transcription subunit 4</fullName>
    </recommendedName>
    <alternativeName>
        <fullName>Activator-recruited cofactor 36 kDa component</fullName>
        <shortName>ARC36</shortName>
    </alternativeName>
    <alternativeName>
        <fullName>Mediator complex subunit 4</fullName>
    </alternativeName>
    <alternativeName>
        <fullName>TRAP/SMCC/PC2 subunit p36 subunit</fullName>
    </alternativeName>
    <alternativeName>
        <fullName>Vitamin D3 receptor-interacting protein complex 36 kDa component</fullName>
        <shortName>DRIP36</shortName>
    </alternativeName>
</protein>
<accession>Q9NPJ6</accession>
<accession>B4DX67</accession>
<accession>Q53GB4</accession>
<accession>Q53H68</accession>
<accession>Q5T912</accession>
<accession>Q6FHC4</accession>
<accession>Q6IA79</accession>
<accession>Q9BS95</accession>
<accession>Q9NYR5</accession>
<proteinExistence type="evidence at protein level"/>
<feature type="initiator methionine" description="Removed" evidence="10">
    <location>
        <position position="1"/>
    </location>
</feature>
<feature type="chain" id="PRO_0000096383" description="Mediator of RNA polymerase II transcription subunit 4">
    <location>
        <begin position="2"/>
        <end position="270"/>
    </location>
</feature>
<feature type="region of interest" description="Disordered" evidence="2">
    <location>
        <begin position="1"/>
        <end position="22"/>
    </location>
</feature>
<feature type="region of interest" description="Disordered" evidence="2">
    <location>
        <begin position="226"/>
        <end position="270"/>
    </location>
</feature>
<feature type="coiled-coil region" evidence="1">
    <location>
        <begin position="24"/>
        <end position="48"/>
    </location>
</feature>
<feature type="coiled-coil region" evidence="1">
    <location>
        <begin position="90"/>
        <end position="131"/>
    </location>
</feature>
<feature type="compositionally biased region" description="Low complexity" evidence="2">
    <location>
        <begin position="259"/>
        <end position="270"/>
    </location>
</feature>
<feature type="modified residue" description="N-acetylalanine" evidence="10">
    <location>
        <position position="2"/>
    </location>
</feature>
<feature type="modified residue" description="Phosphoserine" evidence="8 9">
    <location>
        <position position="32"/>
    </location>
</feature>
<feature type="splice variant" id="VSP_047072" description="In isoform 2." evidence="6">
    <location>
        <begin position="1"/>
        <end position="46"/>
    </location>
</feature>
<feature type="sequence conflict" description="In Ref. 8; AAH05189." evidence="7" ref="8">
    <original>S</original>
    <variation>G</variation>
    <location>
        <position position="105"/>
    </location>
</feature>
<feature type="sequence conflict" description="In Ref. 5; CAG46629." evidence="7" ref="5">
    <original>I</original>
    <variation>T</variation>
    <location>
        <position position="120"/>
    </location>
</feature>
<feature type="sequence conflict" description="In Ref. 6; BAD96737." evidence="7" ref="6">
    <original>Q</original>
    <variation>R</variation>
    <location>
        <position position="127"/>
    </location>
</feature>
<feature type="sequence conflict" description="In Ref. 5; CAG33557." evidence="7" ref="5">
    <original>A</original>
    <variation>P</variation>
    <location>
        <position position="152"/>
    </location>
</feature>
<feature type="sequence conflict" description="In Ref. 2; AAF37289." evidence="7" ref="2">
    <original>R</original>
    <variation>K</variation>
    <location>
        <position position="183"/>
    </location>
</feature>
<feature type="sequence conflict" description="In Ref. 6; BAD96433." evidence="7" ref="6">
    <original>P</original>
    <variation>S</variation>
    <location>
        <position position="218"/>
    </location>
</feature>
<feature type="sequence conflict" description="In Ref. 8; AAH05189." evidence="7" ref="8">
    <original>N</original>
    <variation>D</variation>
    <location>
        <position position="251"/>
    </location>
</feature>
<feature type="sequence conflict" description="In Ref. 2; AAF37289 and 5; CAG46629." evidence="7" ref="2 5">
    <original>S</original>
    <variation>T</variation>
    <location>
        <position position="265"/>
    </location>
</feature>
<feature type="helix" evidence="11">
    <location>
        <begin position="27"/>
        <end position="51"/>
    </location>
</feature>
<feature type="helix" evidence="11">
    <location>
        <begin position="63"/>
        <end position="140"/>
    </location>
</feature>
<feature type="helix" evidence="11">
    <location>
        <begin position="145"/>
        <end position="156"/>
    </location>
</feature>
<feature type="turn" evidence="11">
    <location>
        <begin position="157"/>
        <end position="159"/>
    </location>
</feature>
<feature type="strand" evidence="11">
    <location>
        <begin position="160"/>
        <end position="162"/>
    </location>
</feature>
<feature type="helix" evidence="11">
    <location>
        <begin position="179"/>
        <end position="183"/>
    </location>
</feature>
<feature type="helix" evidence="11">
    <location>
        <begin position="186"/>
        <end position="189"/>
    </location>
</feature>
<name>MED4_HUMAN</name>